<accession>Q5UQQ4</accession>
<name>YL859_MIMIV</name>
<organism>
    <name type="scientific">Acanthamoeba polyphaga mimivirus</name>
    <name type="common">APMV</name>
    <dbReference type="NCBI Taxonomy" id="212035"/>
    <lineage>
        <taxon>Viruses</taxon>
        <taxon>Varidnaviria</taxon>
        <taxon>Bamfordvirae</taxon>
        <taxon>Nucleocytoviricota</taxon>
        <taxon>Megaviricetes</taxon>
        <taxon>Imitervirales</taxon>
        <taxon>Mimiviridae</taxon>
        <taxon>Megamimivirinae</taxon>
        <taxon>Mimivirus</taxon>
        <taxon>Mimivirus bradfordmassiliense</taxon>
    </lineage>
</organism>
<gene>
    <name type="ordered locus">MIMI_L859</name>
</gene>
<protein>
    <recommendedName>
        <fullName>Uncharacterized protein L859</fullName>
    </recommendedName>
</protein>
<evidence type="ECO:0000256" key="1">
    <source>
        <dbReference type="SAM" id="MobiDB-lite"/>
    </source>
</evidence>
<organismHost>
    <name type="scientific">Acanthamoeba polyphaga</name>
    <name type="common">Amoeba</name>
    <dbReference type="NCBI Taxonomy" id="5757"/>
</organismHost>
<proteinExistence type="predicted"/>
<dbReference type="EMBL" id="AY653733">
    <property type="protein sequence ID" value="AAV51117.1"/>
    <property type="molecule type" value="Genomic_DNA"/>
</dbReference>
<dbReference type="KEGG" id="vg:9925520"/>
<dbReference type="OrthoDB" id="30791at10239"/>
<dbReference type="Proteomes" id="UP000001134">
    <property type="component" value="Genome"/>
</dbReference>
<reference key="1">
    <citation type="journal article" date="2004" name="Science">
        <title>The 1.2-megabase genome sequence of Mimivirus.</title>
        <authorList>
            <person name="Raoult D."/>
            <person name="Audic S."/>
            <person name="Robert C."/>
            <person name="Abergel C."/>
            <person name="Renesto P."/>
            <person name="Ogata H."/>
            <person name="La Scola B."/>
            <person name="Susan M."/>
            <person name="Claverie J.-M."/>
        </authorList>
    </citation>
    <scope>NUCLEOTIDE SEQUENCE [LARGE SCALE GENOMIC DNA]</scope>
    <source>
        <strain>Rowbotham-Bradford</strain>
    </source>
</reference>
<sequence length="315" mass="36689">MSNTDALNTANTQITENVDTSSMKVEKTHDSDPMKITNTSFALEMTQHLFEDLVAHGYKNIVKHEVYPGPIIDLQNLVRVMTKGTFIPIKMEDIKDLHDFVMDRLSEFDCSCLGHLCPKEYMIQIWKAGRIQSEFYYCYNYQLQDLSQIYPFVIEWILKRDDMPLNLDKESYEATALMMSKLLESLIKFGNEKIEFVKFYKLCGHIQCPCEKKPASYLDVKKLVGVLTDGGIIGFEGLTKLYVHLEKSIQEIDDRWSHWLPGRTRKPIYYKTFTKGRVTQLSIKCYSFYLQEIALIAYVVTQFILQEKPDLSYRA</sequence>
<keyword id="KW-1185">Reference proteome</keyword>
<feature type="chain" id="PRO_0000071376" description="Uncharacterized protein L859">
    <location>
        <begin position="1"/>
        <end position="315"/>
    </location>
</feature>
<feature type="region of interest" description="Disordered" evidence="1">
    <location>
        <begin position="1"/>
        <end position="31"/>
    </location>
</feature>
<feature type="compositionally biased region" description="Polar residues" evidence="1">
    <location>
        <begin position="1"/>
        <end position="23"/>
    </location>
</feature>